<feature type="chain" id="PRO_0000355502" description="Large ribosomal subunit protein bL20c">
    <location>
        <begin position="1"/>
        <end position="117"/>
    </location>
</feature>
<sequence>MTRIKRGYIARRRRTKLRLFASSFRGAHSRLTRTMTQQRIRALVSAHRDRGKRKRDFRRLWITRINAVIHETGVFYSYNRFIHNLYKKQLLLNRKILAQIALLNRSCLYTISNEIKE</sequence>
<name>RK20_DRANE</name>
<organism>
    <name type="scientific">Draba nemorosa</name>
    <name type="common">Woodland whitlowgrass</name>
    <dbReference type="NCBI Taxonomy" id="171822"/>
    <lineage>
        <taxon>Eukaryota</taxon>
        <taxon>Viridiplantae</taxon>
        <taxon>Streptophyta</taxon>
        <taxon>Embryophyta</taxon>
        <taxon>Tracheophyta</taxon>
        <taxon>Spermatophyta</taxon>
        <taxon>Magnoliopsida</taxon>
        <taxon>eudicotyledons</taxon>
        <taxon>Gunneridae</taxon>
        <taxon>Pentapetalae</taxon>
        <taxon>rosids</taxon>
        <taxon>malvids</taxon>
        <taxon>Brassicales</taxon>
        <taxon>Brassicaceae</taxon>
        <taxon>Arabideae</taxon>
        <taxon>Draba</taxon>
    </lineage>
</organism>
<accession>A4QL42</accession>
<keyword id="KW-0150">Chloroplast</keyword>
<keyword id="KW-0934">Plastid</keyword>
<keyword id="KW-0687">Ribonucleoprotein</keyword>
<keyword id="KW-0689">Ribosomal protein</keyword>
<keyword id="KW-0694">RNA-binding</keyword>
<keyword id="KW-0699">rRNA-binding</keyword>
<protein>
    <recommendedName>
        <fullName evidence="1">Large ribosomal subunit protein bL20c</fullName>
    </recommendedName>
    <alternativeName>
        <fullName evidence="2">50S ribosomal protein L20, chloroplastic</fullName>
    </alternativeName>
</protein>
<proteinExistence type="inferred from homology"/>
<dbReference type="EMBL" id="AP009373">
    <property type="protein sequence ID" value="BAF50397.1"/>
    <property type="molecule type" value="Genomic_DNA"/>
</dbReference>
<dbReference type="RefSeq" id="YP_001123573.1">
    <property type="nucleotide sequence ID" value="NC_009272.1"/>
</dbReference>
<dbReference type="SMR" id="A4QL42"/>
<dbReference type="GeneID" id="4964750"/>
<dbReference type="GO" id="GO:0009507">
    <property type="term" value="C:chloroplast"/>
    <property type="evidence" value="ECO:0007669"/>
    <property type="project" value="UniProtKB-SubCell"/>
</dbReference>
<dbReference type="GO" id="GO:1990904">
    <property type="term" value="C:ribonucleoprotein complex"/>
    <property type="evidence" value="ECO:0007669"/>
    <property type="project" value="UniProtKB-KW"/>
</dbReference>
<dbReference type="GO" id="GO:0005840">
    <property type="term" value="C:ribosome"/>
    <property type="evidence" value="ECO:0007669"/>
    <property type="project" value="UniProtKB-KW"/>
</dbReference>
<dbReference type="GO" id="GO:0019843">
    <property type="term" value="F:rRNA binding"/>
    <property type="evidence" value="ECO:0007669"/>
    <property type="project" value="UniProtKB-UniRule"/>
</dbReference>
<dbReference type="GO" id="GO:0003735">
    <property type="term" value="F:structural constituent of ribosome"/>
    <property type="evidence" value="ECO:0007669"/>
    <property type="project" value="InterPro"/>
</dbReference>
<dbReference type="GO" id="GO:0000027">
    <property type="term" value="P:ribosomal large subunit assembly"/>
    <property type="evidence" value="ECO:0007669"/>
    <property type="project" value="UniProtKB-UniRule"/>
</dbReference>
<dbReference type="GO" id="GO:0006412">
    <property type="term" value="P:translation"/>
    <property type="evidence" value="ECO:0007669"/>
    <property type="project" value="InterPro"/>
</dbReference>
<dbReference type="CDD" id="cd07026">
    <property type="entry name" value="Ribosomal_L20"/>
    <property type="match status" value="1"/>
</dbReference>
<dbReference type="FunFam" id="1.10.1900.20:FF:000001">
    <property type="entry name" value="50S ribosomal protein L20"/>
    <property type="match status" value="1"/>
</dbReference>
<dbReference type="Gene3D" id="6.10.160.10">
    <property type="match status" value="1"/>
</dbReference>
<dbReference type="Gene3D" id="1.10.1900.20">
    <property type="entry name" value="Ribosomal protein L20"/>
    <property type="match status" value="1"/>
</dbReference>
<dbReference type="HAMAP" id="MF_00382">
    <property type="entry name" value="Ribosomal_bL20"/>
    <property type="match status" value="1"/>
</dbReference>
<dbReference type="InterPro" id="IPR005813">
    <property type="entry name" value="Ribosomal_bL20"/>
</dbReference>
<dbReference type="InterPro" id="IPR049946">
    <property type="entry name" value="RIBOSOMAL_L20_CS"/>
</dbReference>
<dbReference type="InterPro" id="IPR035566">
    <property type="entry name" value="Ribosomal_protein_bL20_C"/>
</dbReference>
<dbReference type="NCBIfam" id="TIGR01032">
    <property type="entry name" value="rplT_bact"/>
    <property type="match status" value="1"/>
</dbReference>
<dbReference type="PANTHER" id="PTHR10986">
    <property type="entry name" value="39S RIBOSOMAL PROTEIN L20"/>
    <property type="match status" value="1"/>
</dbReference>
<dbReference type="Pfam" id="PF00453">
    <property type="entry name" value="Ribosomal_L20"/>
    <property type="match status" value="1"/>
</dbReference>
<dbReference type="PRINTS" id="PR00062">
    <property type="entry name" value="RIBOSOMALL20"/>
</dbReference>
<dbReference type="SUPFAM" id="SSF74731">
    <property type="entry name" value="Ribosomal protein L20"/>
    <property type="match status" value="1"/>
</dbReference>
<dbReference type="PROSITE" id="PS00937">
    <property type="entry name" value="RIBOSOMAL_L20"/>
    <property type="match status" value="1"/>
</dbReference>
<geneLocation type="chloroplast"/>
<reference key="1">
    <citation type="submission" date="2007-03" db="EMBL/GenBank/DDBJ databases">
        <title>Sequencing analysis of Draba nemoroza chloroplast DNA.</title>
        <authorList>
            <person name="Hosouchi T."/>
            <person name="Tsuruoka H."/>
            <person name="Kotani H."/>
        </authorList>
    </citation>
    <scope>NUCLEOTIDE SEQUENCE [LARGE SCALE GENOMIC DNA]</scope>
</reference>
<evidence type="ECO:0000255" key="1">
    <source>
        <dbReference type="HAMAP-Rule" id="MF_00382"/>
    </source>
</evidence>
<evidence type="ECO:0000305" key="2"/>
<gene>
    <name evidence="1" type="primary">rpl20</name>
</gene>
<comment type="function">
    <text evidence="1">Binds directly to 23S ribosomal RNA and is necessary for the in vitro assembly process of the 50S ribosomal subunit. It is not involved in the protein synthesizing functions of that subunit.</text>
</comment>
<comment type="subcellular location">
    <subcellularLocation>
        <location>Plastid</location>
        <location>Chloroplast</location>
    </subcellularLocation>
</comment>
<comment type="similarity">
    <text evidence="1">Belongs to the bacterial ribosomal protein bL20 family.</text>
</comment>